<accession>Q6G7R8</accession>
<name>AGRA_STAAS</name>
<feature type="chain" id="PRO_0000080999" description="Accessory gene regulator protein A">
    <location>
        <begin position="1"/>
        <end position="238"/>
    </location>
</feature>
<feature type="domain" description="Response regulatory" evidence="3">
    <location>
        <begin position="2"/>
        <end position="125"/>
    </location>
</feature>
<feature type="domain" description="HTH LytTR-type" evidence="2">
    <location>
        <begin position="143"/>
        <end position="238"/>
    </location>
</feature>
<feature type="modified residue" description="4-aspartylphosphate" evidence="3">
    <location>
        <position position="59"/>
    </location>
</feature>
<dbReference type="EMBL" id="BX571857">
    <property type="protein sequence ID" value="CAG43751.1"/>
    <property type="molecule type" value="Genomic_DNA"/>
</dbReference>
<dbReference type="RefSeq" id="WP_000688492.1">
    <property type="nucleotide sequence ID" value="NC_002953.3"/>
</dbReference>
<dbReference type="BMRB" id="Q6G7R8"/>
<dbReference type="SMR" id="Q6G7R8"/>
<dbReference type="KEGG" id="sas:SAS1944"/>
<dbReference type="HOGENOM" id="CLU_000445_14_6_9"/>
<dbReference type="PRO" id="PR:Q6G7R8"/>
<dbReference type="GO" id="GO:0005737">
    <property type="term" value="C:cytoplasm"/>
    <property type="evidence" value="ECO:0007669"/>
    <property type="project" value="UniProtKB-SubCell"/>
</dbReference>
<dbReference type="GO" id="GO:0003677">
    <property type="term" value="F:DNA binding"/>
    <property type="evidence" value="ECO:0007669"/>
    <property type="project" value="UniProtKB-KW"/>
</dbReference>
<dbReference type="GO" id="GO:0000156">
    <property type="term" value="F:phosphorelay response regulator activity"/>
    <property type="evidence" value="ECO:0007669"/>
    <property type="project" value="InterPro"/>
</dbReference>
<dbReference type="CDD" id="cd17533">
    <property type="entry name" value="REC_LytTR_AgrA-like"/>
    <property type="match status" value="1"/>
</dbReference>
<dbReference type="FunFam" id="2.40.50.1020:FF:000005">
    <property type="entry name" value="Accessory gene regulator A"/>
    <property type="match status" value="1"/>
</dbReference>
<dbReference type="Gene3D" id="3.40.50.2300">
    <property type="match status" value="1"/>
</dbReference>
<dbReference type="Gene3D" id="2.40.50.1020">
    <property type="entry name" value="LytTr DNA-binding domain"/>
    <property type="match status" value="1"/>
</dbReference>
<dbReference type="InterPro" id="IPR011006">
    <property type="entry name" value="CheY-like_superfamily"/>
</dbReference>
<dbReference type="InterPro" id="IPR046947">
    <property type="entry name" value="LytR-like"/>
</dbReference>
<dbReference type="InterPro" id="IPR007492">
    <property type="entry name" value="LytTR_DNA-bd_dom"/>
</dbReference>
<dbReference type="InterPro" id="IPR001789">
    <property type="entry name" value="Sig_transdc_resp-reg_receiver"/>
</dbReference>
<dbReference type="NCBIfam" id="NF046049">
    <property type="entry name" value="quorum_RR_AgrA"/>
    <property type="match status" value="1"/>
</dbReference>
<dbReference type="PANTHER" id="PTHR37299:SF3">
    <property type="entry name" value="STAGE 0 SPORULATION PROTEIN A HOMOLOG"/>
    <property type="match status" value="1"/>
</dbReference>
<dbReference type="PANTHER" id="PTHR37299">
    <property type="entry name" value="TRANSCRIPTIONAL REGULATOR-RELATED"/>
    <property type="match status" value="1"/>
</dbReference>
<dbReference type="Pfam" id="PF04397">
    <property type="entry name" value="LytTR"/>
    <property type="match status" value="1"/>
</dbReference>
<dbReference type="Pfam" id="PF00072">
    <property type="entry name" value="Response_reg"/>
    <property type="match status" value="1"/>
</dbReference>
<dbReference type="SMART" id="SM00850">
    <property type="entry name" value="LytTR"/>
    <property type="match status" value="1"/>
</dbReference>
<dbReference type="SMART" id="SM00448">
    <property type="entry name" value="REC"/>
    <property type="match status" value="1"/>
</dbReference>
<dbReference type="SUPFAM" id="SSF52172">
    <property type="entry name" value="CheY-like"/>
    <property type="match status" value="1"/>
</dbReference>
<dbReference type="PROSITE" id="PS50930">
    <property type="entry name" value="HTH_LYTTR"/>
    <property type="match status" value="1"/>
</dbReference>
<dbReference type="PROSITE" id="PS50110">
    <property type="entry name" value="RESPONSE_REGULATORY"/>
    <property type="match status" value="1"/>
</dbReference>
<comment type="function">
    <text evidence="1">Required for high-level post-exponential phase expression of a series of secreted proteins.</text>
</comment>
<comment type="subcellular location">
    <subcellularLocation>
        <location evidence="1">Cytoplasm</location>
    </subcellularLocation>
</comment>
<organism>
    <name type="scientific">Staphylococcus aureus (strain MSSA476)</name>
    <dbReference type="NCBI Taxonomy" id="282459"/>
    <lineage>
        <taxon>Bacteria</taxon>
        <taxon>Bacillati</taxon>
        <taxon>Bacillota</taxon>
        <taxon>Bacilli</taxon>
        <taxon>Bacillales</taxon>
        <taxon>Staphylococcaceae</taxon>
        <taxon>Staphylococcus</taxon>
    </lineage>
</organism>
<evidence type="ECO:0000250" key="1"/>
<evidence type="ECO:0000255" key="2">
    <source>
        <dbReference type="PROSITE-ProRule" id="PRU00112"/>
    </source>
</evidence>
<evidence type="ECO:0000255" key="3">
    <source>
        <dbReference type="PROSITE-ProRule" id="PRU00169"/>
    </source>
</evidence>
<proteinExistence type="inferred from homology"/>
<keyword id="KW-0010">Activator</keyword>
<keyword id="KW-0963">Cytoplasm</keyword>
<keyword id="KW-0238">DNA-binding</keyword>
<keyword id="KW-0597">Phosphoprotein</keyword>
<keyword id="KW-0804">Transcription</keyword>
<keyword id="KW-0805">Transcription regulation</keyword>
<keyword id="KW-0902">Two-component regulatory system</keyword>
<protein>
    <recommendedName>
        <fullName>Accessory gene regulator protein A</fullName>
    </recommendedName>
</protein>
<reference key="1">
    <citation type="journal article" date="2004" name="Proc. Natl. Acad. Sci. U.S.A.">
        <title>Complete genomes of two clinical Staphylococcus aureus strains: evidence for the rapid evolution of virulence and drug resistance.</title>
        <authorList>
            <person name="Holden M.T.G."/>
            <person name="Feil E.J."/>
            <person name="Lindsay J.A."/>
            <person name="Peacock S.J."/>
            <person name="Day N.P.J."/>
            <person name="Enright M.C."/>
            <person name="Foster T.J."/>
            <person name="Moore C.E."/>
            <person name="Hurst L."/>
            <person name="Atkin R."/>
            <person name="Barron A."/>
            <person name="Bason N."/>
            <person name="Bentley S.D."/>
            <person name="Chillingworth C."/>
            <person name="Chillingworth T."/>
            <person name="Churcher C."/>
            <person name="Clark L."/>
            <person name="Corton C."/>
            <person name="Cronin A."/>
            <person name="Doggett J."/>
            <person name="Dowd L."/>
            <person name="Feltwell T."/>
            <person name="Hance Z."/>
            <person name="Harris B."/>
            <person name="Hauser H."/>
            <person name="Holroyd S."/>
            <person name="Jagels K."/>
            <person name="James K.D."/>
            <person name="Lennard N."/>
            <person name="Line A."/>
            <person name="Mayes R."/>
            <person name="Moule S."/>
            <person name="Mungall K."/>
            <person name="Ormond D."/>
            <person name="Quail M.A."/>
            <person name="Rabbinowitsch E."/>
            <person name="Rutherford K.M."/>
            <person name="Sanders M."/>
            <person name="Sharp S."/>
            <person name="Simmonds M."/>
            <person name="Stevens K."/>
            <person name="Whitehead S."/>
            <person name="Barrell B.G."/>
            <person name="Spratt B.G."/>
            <person name="Parkhill J."/>
        </authorList>
    </citation>
    <scope>NUCLEOTIDE SEQUENCE [LARGE SCALE GENOMIC DNA]</scope>
    <source>
        <strain>MSSA476</strain>
    </source>
</reference>
<sequence>MKIFICEDDPKQRENMVTIIKNYIMIEEKPMEIALATDNPYEVLEQAKNMNDIGCYFLDIQLSTDINGIKLGSEIRKHDPVGNIIFVTSHSELTYLTFVYKVAAMDFIFKDDPAELRTRIIDCLETAHTRLQLLSKDNSVETIELKRGSNSVYVQYDDIMFFESSTKSHRLIAHLDNRQIEFYGNLKELSQLDDRFFRCHNSFVVNRHNIESIDSKERIVYFKNKEHCYASVRNVKKI</sequence>
<gene>
    <name type="primary">agrA</name>
    <name type="ordered locus">SAS1944</name>
</gene>